<keyword id="KW-0963">Cytoplasm</keyword>
<keyword id="KW-0255">Endonuclease</keyword>
<keyword id="KW-0378">Hydrolase</keyword>
<keyword id="KW-0464">Manganese</keyword>
<keyword id="KW-0479">Metal-binding</keyword>
<keyword id="KW-0540">Nuclease</keyword>
<keyword id="KW-1185">Reference proteome</keyword>
<protein>
    <recommendedName>
        <fullName evidence="1">Ribonuclease HII</fullName>
        <shortName evidence="1">RNase HII</shortName>
        <ecNumber evidence="1">3.1.26.4</ecNumber>
    </recommendedName>
</protein>
<dbReference type="EC" id="3.1.26.4" evidence="1"/>
<dbReference type="EMBL" id="CP000141">
    <property type="protein sequence ID" value="ABB15840.1"/>
    <property type="molecule type" value="Genomic_DNA"/>
</dbReference>
<dbReference type="SMR" id="Q3AC76"/>
<dbReference type="FunCoup" id="Q3AC76">
    <property type="interactions" value="424"/>
</dbReference>
<dbReference type="STRING" id="246194.CHY_1426"/>
<dbReference type="KEGG" id="chy:CHY_1426"/>
<dbReference type="eggNOG" id="COG0164">
    <property type="taxonomic scope" value="Bacteria"/>
</dbReference>
<dbReference type="HOGENOM" id="CLU_036532_3_2_9"/>
<dbReference type="InParanoid" id="Q3AC76"/>
<dbReference type="Proteomes" id="UP000002706">
    <property type="component" value="Chromosome"/>
</dbReference>
<dbReference type="GO" id="GO:0005737">
    <property type="term" value="C:cytoplasm"/>
    <property type="evidence" value="ECO:0007669"/>
    <property type="project" value="UniProtKB-SubCell"/>
</dbReference>
<dbReference type="GO" id="GO:0032299">
    <property type="term" value="C:ribonuclease H2 complex"/>
    <property type="evidence" value="ECO:0007669"/>
    <property type="project" value="TreeGrafter"/>
</dbReference>
<dbReference type="GO" id="GO:0030145">
    <property type="term" value="F:manganese ion binding"/>
    <property type="evidence" value="ECO:0007669"/>
    <property type="project" value="UniProtKB-UniRule"/>
</dbReference>
<dbReference type="GO" id="GO:0003723">
    <property type="term" value="F:RNA binding"/>
    <property type="evidence" value="ECO:0007669"/>
    <property type="project" value="InterPro"/>
</dbReference>
<dbReference type="GO" id="GO:0004523">
    <property type="term" value="F:RNA-DNA hybrid ribonuclease activity"/>
    <property type="evidence" value="ECO:0007669"/>
    <property type="project" value="UniProtKB-UniRule"/>
</dbReference>
<dbReference type="GO" id="GO:0043137">
    <property type="term" value="P:DNA replication, removal of RNA primer"/>
    <property type="evidence" value="ECO:0007669"/>
    <property type="project" value="TreeGrafter"/>
</dbReference>
<dbReference type="GO" id="GO:0006298">
    <property type="term" value="P:mismatch repair"/>
    <property type="evidence" value="ECO:0007669"/>
    <property type="project" value="TreeGrafter"/>
</dbReference>
<dbReference type="CDD" id="cd07182">
    <property type="entry name" value="RNase_HII_bacteria_HII_like"/>
    <property type="match status" value="1"/>
</dbReference>
<dbReference type="Gene3D" id="3.30.420.10">
    <property type="entry name" value="Ribonuclease H-like superfamily/Ribonuclease H"/>
    <property type="match status" value="1"/>
</dbReference>
<dbReference type="HAMAP" id="MF_00052_B">
    <property type="entry name" value="RNase_HII_B"/>
    <property type="match status" value="1"/>
</dbReference>
<dbReference type="InterPro" id="IPR022898">
    <property type="entry name" value="RNase_HII"/>
</dbReference>
<dbReference type="InterPro" id="IPR001352">
    <property type="entry name" value="RNase_HII/HIII"/>
</dbReference>
<dbReference type="InterPro" id="IPR024567">
    <property type="entry name" value="RNase_HII/HIII_dom"/>
</dbReference>
<dbReference type="InterPro" id="IPR012337">
    <property type="entry name" value="RNaseH-like_sf"/>
</dbReference>
<dbReference type="InterPro" id="IPR036397">
    <property type="entry name" value="RNaseH_sf"/>
</dbReference>
<dbReference type="NCBIfam" id="NF000594">
    <property type="entry name" value="PRK00015.1-1"/>
    <property type="match status" value="1"/>
</dbReference>
<dbReference type="NCBIfam" id="NF000595">
    <property type="entry name" value="PRK00015.1-3"/>
    <property type="match status" value="1"/>
</dbReference>
<dbReference type="PANTHER" id="PTHR10954">
    <property type="entry name" value="RIBONUCLEASE H2 SUBUNIT A"/>
    <property type="match status" value="1"/>
</dbReference>
<dbReference type="PANTHER" id="PTHR10954:SF18">
    <property type="entry name" value="RIBONUCLEASE HII"/>
    <property type="match status" value="1"/>
</dbReference>
<dbReference type="Pfam" id="PF01351">
    <property type="entry name" value="RNase_HII"/>
    <property type="match status" value="1"/>
</dbReference>
<dbReference type="SUPFAM" id="SSF53098">
    <property type="entry name" value="Ribonuclease H-like"/>
    <property type="match status" value="1"/>
</dbReference>
<dbReference type="PROSITE" id="PS51975">
    <property type="entry name" value="RNASE_H_2"/>
    <property type="match status" value="1"/>
</dbReference>
<sequence>MQGKFDKIANITLVMKTLDNNLPFNLQIENQLFSSGYELVAGGDEAGRGPVAGPVVAAIVVIKPGIYIPEVDDSKKLSSKKREKLFEEIINLVTDWSVAVVGPDLIDRLNIYQATKFAFKAALDSLSIKPEALILDALKLTGFSGKQVSMVKADEISFAVACASILAKVIRDKIMEQYDKDFPGYGFKKNKGYLTREHREALELLGPSPIHRKSFEPIKSFYGQLKLFEKV</sequence>
<organism>
    <name type="scientific">Carboxydothermus hydrogenoformans (strain ATCC BAA-161 / DSM 6008 / Z-2901)</name>
    <dbReference type="NCBI Taxonomy" id="246194"/>
    <lineage>
        <taxon>Bacteria</taxon>
        <taxon>Bacillati</taxon>
        <taxon>Bacillota</taxon>
        <taxon>Clostridia</taxon>
        <taxon>Thermoanaerobacterales</taxon>
        <taxon>Thermoanaerobacteraceae</taxon>
        <taxon>Carboxydothermus</taxon>
    </lineage>
</organism>
<comment type="function">
    <text evidence="1">Endonuclease that specifically degrades the RNA of RNA-DNA hybrids.</text>
</comment>
<comment type="catalytic activity">
    <reaction evidence="1">
        <text>Endonucleolytic cleavage to 5'-phosphomonoester.</text>
        <dbReference type="EC" id="3.1.26.4"/>
    </reaction>
</comment>
<comment type="cofactor">
    <cofactor evidence="1">
        <name>Mn(2+)</name>
        <dbReference type="ChEBI" id="CHEBI:29035"/>
    </cofactor>
    <cofactor evidence="1">
        <name>Mg(2+)</name>
        <dbReference type="ChEBI" id="CHEBI:18420"/>
    </cofactor>
    <text evidence="1">Manganese or magnesium. Binds 1 divalent metal ion per monomer in the absence of substrate. May bind a second metal ion after substrate binding.</text>
</comment>
<comment type="subcellular location">
    <subcellularLocation>
        <location evidence="1">Cytoplasm</location>
    </subcellularLocation>
</comment>
<comment type="similarity">
    <text evidence="1">Belongs to the RNase HII family.</text>
</comment>
<evidence type="ECO:0000255" key="1">
    <source>
        <dbReference type="HAMAP-Rule" id="MF_00052"/>
    </source>
</evidence>
<evidence type="ECO:0000255" key="2">
    <source>
        <dbReference type="PROSITE-ProRule" id="PRU01319"/>
    </source>
</evidence>
<reference key="1">
    <citation type="journal article" date="2005" name="PLoS Genet.">
        <title>Life in hot carbon monoxide: the complete genome sequence of Carboxydothermus hydrogenoformans Z-2901.</title>
        <authorList>
            <person name="Wu M."/>
            <person name="Ren Q."/>
            <person name="Durkin A.S."/>
            <person name="Daugherty S.C."/>
            <person name="Brinkac L.M."/>
            <person name="Dodson R.J."/>
            <person name="Madupu R."/>
            <person name="Sullivan S.A."/>
            <person name="Kolonay J.F."/>
            <person name="Nelson W.C."/>
            <person name="Tallon L.J."/>
            <person name="Jones K.M."/>
            <person name="Ulrich L.E."/>
            <person name="Gonzalez J.M."/>
            <person name="Zhulin I.B."/>
            <person name="Robb F.T."/>
            <person name="Eisen J.A."/>
        </authorList>
    </citation>
    <scope>NUCLEOTIDE SEQUENCE [LARGE SCALE GENOMIC DNA]</scope>
    <source>
        <strain>ATCC BAA-161 / DSM 6008 / Z-2901</strain>
    </source>
</reference>
<feature type="chain" id="PRO_0000235710" description="Ribonuclease HII">
    <location>
        <begin position="1"/>
        <end position="231"/>
    </location>
</feature>
<feature type="domain" description="RNase H type-2" evidence="2">
    <location>
        <begin position="38"/>
        <end position="227"/>
    </location>
</feature>
<feature type="binding site" evidence="1">
    <location>
        <position position="44"/>
    </location>
    <ligand>
        <name>a divalent metal cation</name>
        <dbReference type="ChEBI" id="CHEBI:60240"/>
    </ligand>
</feature>
<feature type="binding site" evidence="1">
    <location>
        <position position="45"/>
    </location>
    <ligand>
        <name>a divalent metal cation</name>
        <dbReference type="ChEBI" id="CHEBI:60240"/>
    </ligand>
</feature>
<feature type="binding site" evidence="1">
    <location>
        <position position="136"/>
    </location>
    <ligand>
        <name>a divalent metal cation</name>
        <dbReference type="ChEBI" id="CHEBI:60240"/>
    </ligand>
</feature>
<name>RNH2_CARHZ</name>
<gene>
    <name evidence="1" type="primary">rnhB</name>
    <name type="ordered locus">CHY_1426</name>
</gene>
<accession>Q3AC76</accession>
<proteinExistence type="inferred from homology"/>